<proteinExistence type="evidence at protein level"/>
<sequence length="132" mass="14371">MASSASSVVRATVRAVSKRKIQATRAALTLTPSAVQKIKELLKDKPEHVGVKVGVRTRGCNGLSYTLEYTKSKGDSDEEVVQDGVRVFIEKKAQLTLLGTEMDYVEDKLSSEFVFNNPNIKGTCGCGESFNI</sequence>
<accession>P0DN75</accession>
<comment type="function">
    <text evidence="1 6">Involved in the maturation of mitochondrial 4Fe-4S proteins functioning late in the iron-sulfur cluster assembly pathway. Probably involved in the binding of an intermediate of Fe/S cluster assembly (By similarity). Component of a putative magnetoreceptor complex formed by ISCA1 and CRY4, a member of the cryptochrome family that are known to be required for light-dependent magnetosensitivity in various orgnisms. The rod-like assembly may facilitate the perception of the Earth's weak magnetic field. Both ISCA1 and the complex with CRY4 have magnetic properties and are attracted to iron beads. When exposed to a magnetic field of 1 mT (superior to the natural magnetic field), over 50% of the rod-like complexes align more or less in parallel with the magnetic field at room temperature.</text>
</comment>
<comment type="subunit">
    <text evidence="3">Homooligomer, forming a rod-shaped structure 24 nm in length that may arise through a double-helical assembly of subunits. Interacts with CRY4; CRY4 seems to be associated with the outside of the rod-shaped homooligomer. Does not interact with CRY1 or CRY2.</text>
</comment>
<comment type="subcellular location">
    <subcellularLocation>
        <location evidence="1">Mitochondrion</location>
    </subcellularLocation>
</comment>
<comment type="tissue specificity">
    <text evidence="3">Detected in retina, especially in the retinal ganglion layer, the inner nuclear layer and the outer nuclear layer. Detected in retina visual pigment cells (at protein level).</text>
</comment>
<comment type="miscellaneous">
    <text evidence="3">The native protein appears orange-brown and has absorption maxima at 420 and 330 nm, indicative of bound iron ions.</text>
</comment>
<comment type="similarity">
    <text evidence="5">Belongs to the HesB/IscA family.</text>
</comment>
<comment type="caution">
    <text evidence="5">The role of this protein complex as a component of a magnetic biocompass is controversial and further experiments are required to verify how migrating birds and other animals make use of the Earth's magnetic field to navigate or orient themselves. Only about half of the rod-shaped protein complexes align with magnetic fields of 1 mT at room temperature. It is not certain that this is sufficient to mediate responses to the Earth's magnetic field (about 0.03-0.065 mT) in vivo, but the complex may give rise to technical applications.</text>
</comment>
<protein>
    <recommendedName>
        <fullName>Iron-sulfur cluster assembly 1 homolog, mitochondrial</fullName>
    </recommendedName>
    <alternativeName>
        <fullName evidence="4">Putative magnetoreceptor subunit MagR</fullName>
        <shortName evidence="4">MagR</shortName>
    </alternativeName>
</protein>
<feature type="transit peptide" description="Mitochondrion" evidence="2">
    <location>
        <begin position="1"/>
        <end position="15"/>
    </location>
</feature>
<feature type="chain" id="PRO_0000435361" description="Iron-sulfur cluster assembly 1 homolog, mitochondrial">
    <location>
        <begin position="16"/>
        <end position="132"/>
    </location>
</feature>
<feature type="binding site" evidence="6">
    <location>
        <position position="60"/>
    </location>
    <ligand>
        <name>Fe cation</name>
        <dbReference type="ChEBI" id="CHEBI:24875"/>
    </ligand>
</feature>
<feature type="binding site" evidence="6">
    <location>
        <position position="124"/>
    </location>
    <ligand>
        <name>Fe cation</name>
        <dbReference type="ChEBI" id="CHEBI:24875"/>
    </ligand>
</feature>
<feature type="binding site" evidence="6">
    <location>
        <position position="126"/>
    </location>
    <ligand>
        <name>Fe cation</name>
        <dbReference type="ChEBI" id="CHEBI:24875"/>
    </ligand>
</feature>
<feature type="mutagenesis site" description="Abolishes iron binding and abolishes interaction with CRY4; when associated with A-124 and A-126." evidence="3">
    <original>C</original>
    <variation>A</variation>
    <location>
        <position position="60"/>
    </location>
</feature>
<feature type="mutagenesis site" description="Abolishes iron binding and abolishes interaction with CRY4; when associated with A-60 and A-126." evidence="3">
    <original>C</original>
    <variation>A</variation>
    <location>
        <position position="124"/>
    </location>
</feature>
<feature type="mutagenesis site" description="Abolishes iron binding and abolishes interaction with CRY4; when associated with A-60 and A-124." evidence="3">
    <original>C</original>
    <variation>A</variation>
    <location>
        <position position="126"/>
    </location>
</feature>
<dbReference type="RefSeq" id="XP_064901911.1">
    <property type="nucleotide sequence ID" value="XM_065045839.1"/>
</dbReference>
<dbReference type="SASBDB" id="P0DN75"/>
<dbReference type="SMR" id="P0DN75"/>
<dbReference type="GeneID" id="102090777"/>
<dbReference type="eggNOG" id="KOG1120">
    <property type="taxonomic scope" value="Eukaryota"/>
</dbReference>
<dbReference type="GO" id="GO:0005739">
    <property type="term" value="C:mitochondrion"/>
    <property type="evidence" value="ECO:0007669"/>
    <property type="project" value="UniProtKB-SubCell"/>
</dbReference>
<dbReference type="GO" id="GO:0051537">
    <property type="term" value="F:2 iron, 2 sulfur cluster binding"/>
    <property type="evidence" value="ECO:0007669"/>
    <property type="project" value="TreeGrafter"/>
</dbReference>
<dbReference type="GO" id="GO:0046872">
    <property type="term" value="F:metal ion binding"/>
    <property type="evidence" value="ECO:0007669"/>
    <property type="project" value="UniProtKB-KW"/>
</dbReference>
<dbReference type="GO" id="GO:0016226">
    <property type="term" value="P:iron-sulfur cluster assembly"/>
    <property type="evidence" value="ECO:0007669"/>
    <property type="project" value="InterPro"/>
</dbReference>
<dbReference type="FunFam" id="2.60.300.12:FF:000001">
    <property type="entry name" value="Iron-binding protein IscA"/>
    <property type="match status" value="1"/>
</dbReference>
<dbReference type="Gene3D" id="2.60.300.12">
    <property type="entry name" value="HesB-like domain"/>
    <property type="match status" value="1"/>
</dbReference>
<dbReference type="InterPro" id="IPR050322">
    <property type="entry name" value="Fe-S_cluster_asmbl/transfer"/>
</dbReference>
<dbReference type="InterPro" id="IPR000361">
    <property type="entry name" value="FeS_biogenesis"/>
</dbReference>
<dbReference type="InterPro" id="IPR016092">
    <property type="entry name" value="FeS_cluster_insertion"/>
</dbReference>
<dbReference type="InterPro" id="IPR017870">
    <property type="entry name" value="FeS_cluster_insertion_CS"/>
</dbReference>
<dbReference type="InterPro" id="IPR035903">
    <property type="entry name" value="HesB-like_dom_sf"/>
</dbReference>
<dbReference type="NCBIfam" id="TIGR00049">
    <property type="entry name" value="iron-sulfur cluster assembly accessory protein"/>
    <property type="match status" value="1"/>
</dbReference>
<dbReference type="PANTHER" id="PTHR10072:SF41">
    <property type="entry name" value="IRON-SULFUR CLUSTER ASSEMBLY 1 HOMOLOG, MITOCHONDRIAL"/>
    <property type="match status" value="1"/>
</dbReference>
<dbReference type="PANTHER" id="PTHR10072">
    <property type="entry name" value="IRON-SULFUR CLUSTER ASSEMBLY PROTEIN"/>
    <property type="match status" value="1"/>
</dbReference>
<dbReference type="Pfam" id="PF01521">
    <property type="entry name" value="Fe-S_biosyn"/>
    <property type="match status" value="1"/>
</dbReference>
<dbReference type="SUPFAM" id="SSF89360">
    <property type="entry name" value="HesB-like domain"/>
    <property type="match status" value="1"/>
</dbReference>
<dbReference type="PROSITE" id="PS01152">
    <property type="entry name" value="HESB"/>
    <property type="match status" value="1"/>
</dbReference>
<keyword id="KW-0408">Iron</keyword>
<keyword id="KW-0411">Iron-sulfur</keyword>
<keyword id="KW-0479">Metal-binding</keyword>
<keyword id="KW-0496">Mitochondrion</keyword>
<keyword id="KW-0809">Transit peptide</keyword>
<gene>
    <name type="primary">ISCA1</name>
</gene>
<organism>
    <name type="scientific">Columba livia</name>
    <name type="common">Rock dove</name>
    <dbReference type="NCBI Taxonomy" id="8932"/>
    <lineage>
        <taxon>Eukaryota</taxon>
        <taxon>Metazoa</taxon>
        <taxon>Chordata</taxon>
        <taxon>Craniata</taxon>
        <taxon>Vertebrata</taxon>
        <taxon>Euteleostomi</taxon>
        <taxon>Archelosauria</taxon>
        <taxon>Archosauria</taxon>
        <taxon>Dinosauria</taxon>
        <taxon>Saurischia</taxon>
        <taxon>Theropoda</taxon>
        <taxon>Coelurosauria</taxon>
        <taxon>Aves</taxon>
        <taxon>Neognathae</taxon>
        <taxon>Neoaves</taxon>
        <taxon>Columbimorphae</taxon>
        <taxon>Columbiformes</taxon>
        <taxon>Columbidae</taxon>
        <taxon>Columba</taxon>
    </lineage>
</organism>
<evidence type="ECO:0000250" key="1">
    <source>
        <dbReference type="UniProtKB" id="Q9BUE6"/>
    </source>
</evidence>
<evidence type="ECO:0000255" key="2"/>
<evidence type="ECO:0000269" key="3">
    <source>
    </source>
</evidence>
<evidence type="ECO:0000303" key="4">
    <source>
    </source>
</evidence>
<evidence type="ECO:0000305" key="5"/>
<evidence type="ECO:0000305" key="6">
    <source>
    </source>
</evidence>
<name>ISCA1_COLLI</name>
<reference key="1">
    <citation type="journal article" date="2016" name="Nat. Mater.">
        <title>A magnetic protein biocompass.</title>
        <authorList>
            <person name="Qin S."/>
            <person name="Yin H."/>
            <person name="Yang C."/>
            <person name="Dou Y."/>
            <person name="Liu Z."/>
            <person name="Zhang P."/>
            <person name="Yu H."/>
            <person name="Huang Y."/>
            <person name="Feng J."/>
            <person name="Hao J."/>
            <person name="Hao J."/>
            <person name="Deng L."/>
            <person name="Yan X."/>
            <person name="Dong X."/>
            <person name="Zhao Z."/>
            <person name="Jiang T."/>
            <person name="Wang H.W."/>
            <person name="Luo S.J."/>
            <person name="Xie C."/>
        </authorList>
    </citation>
    <scope>NUCLEOTIDE SEQUENCE [MRNA]</scope>
    <scope>FUNCTION</scope>
    <scope>INTERACTION WITH CRY4</scope>
    <scope>STRUCTURE BY ELECTRON MICROSCOPY</scope>
    <scope>3D-STRUCTURE MODELING</scope>
    <scope>TISSUE SPECIFICITY</scope>
    <scope>MUTAGENESIS OF CYS-60; CYS-124 AND CYS-126</scope>
</reference>